<gene>
    <name evidence="1" type="primary">kynB</name>
    <name type="ordered locus">Dgeo_1533</name>
</gene>
<proteinExistence type="inferred from homology"/>
<reference key="1">
    <citation type="submission" date="2006-04" db="EMBL/GenBank/DDBJ databases">
        <title>Complete sequence of chromosome of Deinococcus geothermalis DSM 11300.</title>
        <authorList>
            <person name="Copeland A."/>
            <person name="Lucas S."/>
            <person name="Lapidus A."/>
            <person name="Barry K."/>
            <person name="Detter J.C."/>
            <person name="Glavina del Rio T."/>
            <person name="Hammon N."/>
            <person name="Israni S."/>
            <person name="Dalin E."/>
            <person name="Tice H."/>
            <person name="Pitluck S."/>
            <person name="Brettin T."/>
            <person name="Bruce D."/>
            <person name="Han C."/>
            <person name="Tapia R."/>
            <person name="Saunders E."/>
            <person name="Gilna P."/>
            <person name="Schmutz J."/>
            <person name="Larimer F."/>
            <person name="Land M."/>
            <person name="Hauser L."/>
            <person name="Kyrpides N."/>
            <person name="Kim E."/>
            <person name="Daly M.J."/>
            <person name="Fredrickson J.K."/>
            <person name="Makarova K.S."/>
            <person name="Gaidamakova E.K."/>
            <person name="Zhai M."/>
            <person name="Richardson P."/>
        </authorList>
    </citation>
    <scope>NUCLEOTIDE SEQUENCE [LARGE SCALE GENOMIC DNA]</scope>
    <source>
        <strain>DSM 11300 / CIP 105573 / AG-3a</strain>
    </source>
</reference>
<protein>
    <recommendedName>
        <fullName evidence="1">Kynurenine formamidase</fullName>
        <shortName evidence="1">KFA</shortName>
        <shortName evidence="1">KFase</shortName>
        <ecNumber evidence="1">3.5.1.9</ecNumber>
    </recommendedName>
    <alternativeName>
        <fullName evidence="1">Arylformamidase</fullName>
    </alternativeName>
    <alternativeName>
        <fullName evidence="1">N-formylkynurenine formamidase</fullName>
        <shortName evidence="1">FKF</shortName>
    </alternativeName>
</protein>
<comment type="function">
    <text evidence="1">Catalyzes the hydrolysis of N-formyl-L-kynurenine to L-kynurenine, the second step in the kynurenine pathway of tryptophan degradation.</text>
</comment>
<comment type="catalytic activity">
    <reaction evidence="1">
        <text>N-formyl-L-kynurenine + H2O = L-kynurenine + formate + H(+)</text>
        <dbReference type="Rhea" id="RHEA:13009"/>
        <dbReference type="ChEBI" id="CHEBI:15377"/>
        <dbReference type="ChEBI" id="CHEBI:15378"/>
        <dbReference type="ChEBI" id="CHEBI:15740"/>
        <dbReference type="ChEBI" id="CHEBI:57959"/>
        <dbReference type="ChEBI" id="CHEBI:58629"/>
        <dbReference type="EC" id="3.5.1.9"/>
    </reaction>
</comment>
<comment type="cofactor">
    <cofactor evidence="1">
        <name>Zn(2+)</name>
        <dbReference type="ChEBI" id="CHEBI:29105"/>
    </cofactor>
    <text evidence="1">Binds 2 zinc ions per subunit.</text>
</comment>
<comment type="pathway">
    <text evidence="1">Amino-acid degradation; L-tryptophan degradation via kynurenine pathway; L-kynurenine from L-tryptophan: step 2/2.</text>
</comment>
<comment type="subunit">
    <text evidence="1">Homodimer.</text>
</comment>
<comment type="similarity">
    <text evidence="1">Belongs to the Cyclase 1 superfamily. KynB family.</text>
</comment>
<feature type="chain" id="PRO_0000362121" description="Kynurenine formamidase">
    <location>
        <begin position="1"/>
        <end position="213"/>
    </location>
</feature>
<feature type="active site" description="Proton donor/acceptor" evidence="1">
    <location>
        <position position="55"/>
    </location>
</feature>
<feature type="binding site" evidence="1">
    <location>
        <position position="15"/>
    </location>
    <ligand>
        <name>substrate</name>
    </ligand>
</feature>
<feature type="binding site" evidence="1">
    <location>
        <position position="45"/>
    </location>
    <ligand>
        <name>Zn(2+)</name>
        <dbReference type="ChEBI" id="CHEBI:29105"/>
        <label>1</label>
    </ligand>
</feature>
<feature type="binding site" evidence="1">
    <location>
        <position position="49"/>
    </location>
    <ligand>
        <name>Zn(2+)</name>
        <dbReference type="ChEBI" id="CHEBI:29105"/>
        <label>1</label>
    </ligand>
</feature>
<feature type="binding site" evidence="1">
    <location>
        <position position="51"/>
    </location>
    <ligand>
        <name>Zn(2+)</name>
        <dbReference type="ChEBI" id="CHEBI:29105"/>
        <label>1</label>
    </ligand>
</feature>
<feature type="binding site" evidence="1">
    <location>
        <position position="51"/>
    </location>
    <ligand>
        <name>Zn(2+)</name>
        <dbReference type="ChEBI" id="CHEBI:29105"/>
        <label>2</label>
    </ligand>
</feature>
<feature type="binding site" evidence="1">
    <location>
        <position position="157"/>
    </location>
    <ligand>
        <name>Zn(2+)</name>
        <dbReference type="ChEBI" id="CHEBI:29105"/>
        <label>2</label>
    </ligand>
</feature>
<feature type="binding site" evidence="1">
    <location>
        <position position="169"/>
    </location>
    <ligand>
        <name>Zn(2+)</name>
        <dbReference type="ChEBI" id="CHEBI:29105"/>
        <label>1</label>
    </ligand>
</feature>
<feature type="binding site" evidence="1">
    <location>
        <position position="169"/>
    </location>
    <ligand>
        <name>Zn(2+)</name>
        <dbReference type="ChEBI" id="CHEBI:29105"/>
        <label>2</label>
    </ligand>
</feature>
<dbReference type="EC" id="3.5.1.9" evidence="1"/>
<dbReference type="EMBL" id="CP000359">
    <property type="protein sequence ID" value="ABF45828.1"/>
    <property type="molecule type" value="Genomic_DNA"/>
</dbReference>
<dbReference type="RefSeq" id="WP_011530662.1">
    <property type="nucleotide sequence ID" value="NC_008025.1"/>
</dbReference>
<dbReference type="SMR" id="Q1IY56"/>
<dbReference type="STRING" id="319795.Dgeo_1533"/>
<dbReference type="KEGG" id="dge:Dgeo_1533"/>
<dbReference type="eggNOG" id="COG1878">
    <property type="taxonomic scope" value="Bacteria"/>
</dbReference>
<dbReference type="HOGENOM" id="CLU_030671_3_1_0"/>
<dbReference type="UniPathway" id="UPA00333">
    <property type="reaction ID" value="UER00454"/>
</dbReference>
<dbReference type="Proteomes" id="UP000002431">
    <property type="component" value="Chromosome"/>
</dbReference>
<dbReference type="GO" id="GO:0004061">
    <property type="term" value="F:arylformamidase activity"/>
    <property type="evidence" value="ECO:0000250"/>
    <property type="project" value="UniProtKB"/>
</dbReference>
<dbReference type="GO" id="GO:0004328">
    <property type="term" value="F:formamidase activity"/>
    <property type="evidence" value="ECO:0007669"/>
    <property type="project" value="InterPro"/>
</dbReference>
<dbReference type="GO" id="GO:0008270">
    <property type="term" value="F:zinc ion binding"/>
    <property type="evidence" value="ECO:0007669"/>
    <property type="project" value="UniProtKB-UniRule"/>
</dbReference>
<dbReference type="GO" id="GO:0043420">
    <property type="term" value="P:anthranilate metabolic process"/>
    <property type="evidence" value="ECO:0000250"/>
    <property type="project" value="UniProtKB"/>
</dbReference>
<dbReference type="GO" id="GO:0019441">
    <property type="term" value="P:L-tryptophan catabolic process to kynurenine"/>
    <property type="evidence" value="ECO:0000250"/>
    <property type="project" value="UniProtKB"/>
</dbReference>
<dbReference type="FunFam" id="3.50.30.50:FF:000001">
    <property type="entry name" value="Kynurenine formamidase"/>
    <property type="match status" value="1"/>
</dbReference>
<dbReference type="Gene3D" id="3.50.30.50">
    <property type="entry name" value="Putative cyclase"/>
    <property type="match status" value="1"/>
</dbReference>
<dbReference type="HAMAP" id="MF_01969">
    <property type="entry name" value="KynB"/>
    <property type="match status" value="1"/>
</dbReference>
<dbReference type="InterPro" id="IPR007325">
    <property type="entry name" value="KFase/CYL"/>
</dbReference>
<dbReference type="InterPro" id="IPR037175">
    <property type="entry name" value="KFase_sf"/>
</dbReference>
<dbReference type="InterPro" id="IPR017484">
    <property type="entry name" value="Kynurenine_formamidase_bac"/>
</dbReference>
<dbReference type="PANTHER" id="PTHR31118">
    <property type="entry name" value="CYCLASE-LIKE PROTEIN 2"/>
    <property type="match status" value="1"/>
</dbReference>
<dbReference type="PANTHER" id="PTHR31118:SF32">
    <property type="entry name" value="KYNURENINE FORMAMIDASE"/>
    <property type="match status" value="1"/>
</dbReference>
<dbReference type="Pfam" id="PF04199">
    <property type="entry name" value="Cyclase"/>
    <property type="match status" value="1"/>
</dbReference>
<dbReference type="SUPFAM" id="SSF102198">
    <property type="entry name" value="Putative cyclase"/>
    <property type="match status" value="1"/>
</dbReference>
<organism>
    <name type="scientific">Deinococcus geothermalis (strain DSM 11300 / CIP 105573 / AG-3a)</name>
    <dbReference type="NCBI Taxonomy" id="319795"/>
    <lineage>
        <taxon>Bacteria</taxon>
        <taxon>Thermotogati</taxon>
        <taxon>Deinococcota</taxon>
        <taxon>Deinococci</taxon>
        <taxon>Deinococcales</taxon>
        <taxon>Deinococcaceae</taxon>
        <taxon>Deinococcus</taxon>
    </lineage>
</organism>
<keyword id="KW-0378">Hydrolase</keyword>
<keyword id="KW-0479">Metal-binding</keyword>
<keyword id="KW-0823">Tryptophan catabolism</keyword>
<keyword id="KW-0862">Zinc</keyword>
<name>KYNB_DEIGD</name>
<accession>Q1IY56</accession>
<sequence>MIDISRQLTPSHPNWPGDAPFRVKPGARIAQGDSVNTGELCTSTHTGTHVDAPWHYSETGARLEEVELNRYVGRCRVVTVRAEGGLIPAAALAGLPKRLPPRLLLHTGQPAHWTEFPEDFAALDPALIREAARRGVRLIGTDSPSVDPLTSKTLDAHHACLETDTLILEGLNLAEVPDGEYDLVCLPLPLAEVDGAPARAILLPAGTLPEGEG</sequence>
<evidence type="ECO:0000255" key="1">
    <source>
        <dbReference type="HAMAP-Rule" id="MF_01969"/>
    </source>
</evidence>